<accession>Q6CA87</accession>
<reference key="1">
    <citation type="journal article" date="2004" name="Nature">
        <title>Genome evolution in yeasts.</title>
        <authorList>
            <person name="Dujon B."/>
            <person name="Sherman D."/>
            <person name="Fischer G."/>
            <person name="Durrens P."/>
            <person name="Casaregola S."/>
            <person name="Lafontaine I."/>
            <person name="de Montigny J."/>
            <person name="Marck C."/>
            <person name="Neuveglise C."/>
            <person name="Talla E."/>
            <person name="Goffard N."/>
            <person name="Frangeul L."/>
            <person name="Aigle M."/>
            <person name="Anthouard V."/>
            <person name="Babour A."/>
            <person name="Barbe V."/>
            <person name="Barnay S."/>
            <person name="Blanchin S."/>
            <person name="Beckerich J.-M."/>
            <person name="Beyne E."/>
            <person name="Bleykasten C."/>
            <person name="Boisrame A."/>
            <person name="Boyer J."/>
            <person name="Cattolico L."/>
            <person name="Confanioleri F."/>
            <person name="de Daruvar A."/>
            <person name="Despons L."/>
            <person name="Fabre E."/>
            <person name="Fairhead C."/>
            <person name="Ferry-Dumazet H."/>
            <person name="Groppi A."/>
            <person name="Hantraye F."/>
            <person name="Hennequin C."/>
            <person name="Jauniaux N."/>
            <person name="Joyet P."/>
            <person name="Kachouri R."/>
            <person name="Kerrest A."/>
            <person name="Koszul R."/>
            <person name="Lemaire M."/>
            <person name="Lesur I."/>
            <person name="Ma L."/>
            <person name="Muller H."/>
            <person name="Nicaud J.-M."/>
            <person name="Nikolski M."/>
            <person name="Oztas S."/>
            <person name="Ozier-Kalogeropoulos O."/>
            <person name="Pellenz S."/>
            <person name="Potier S."/>
            <person name="Richard G.-F."/>
            <person name="Straub M.-L."/>
            <person name="Suleau A."/>
            <person name="Swennen D."/>
            <person name="Tekaia F."/>
            <person name="Wesolowski-Louvel M."/>
            <person name="Westhof E."/>
            <person name="Wirth B."/>
            <person name="Zeniou-Meyer M."/>
            <person name="Zivanovic Y."/>
            <person name="Bolotin-Fukuhara M."/>
            <person name="Thierry A."/>
            <person name="Bouchier C."/>
            <person name="Caudron B."/>
            <person name="Scarpelli C."/>
            <person name="Gaillardin C."/>
            <person name="Weissenbach J."/>
            <person name="Wincker P."/>
            <person name="Souciet J.-L."/>
        </authorList>
    </citation>
    <scope>NUCLEOTIDE SEQUENCE [LARGE SCALE GENOMIC DNA]</scope>
    <source>
        <strain>CLIB 122 / E 150</strain>
    </source>
</reference>
<dbReference type="EC" id="3.6.4.12"/>
<dbReference type="EMBL" id="CR382130">
    <property type="protein sequence ID" value="CAG80613.1"/>
    <property type="molecule type" value="Genomic_DNA"/>
</dbReference>
<dbReference type="RefSeq" id="XP_502425.1">
    <property type="nucleotide sequence ID" value="XM_502425.1"/>
</dbReference>
<dbReference type="SMR" id="Q6CA87"/>
<dbReference type="FunCoup" id="Q6CA87">
    <property type="interactions" value="202"/>
</dbReference>
<dbReference type="STRING" id="284591.Q6CA87"/>
<dbReference type="EnsemblFungi" id="CAG80613">
    <property type="protein sequence ID" value="CAG80613"/>
    <property type="gene ID" value="YALI0_D04961g"/>
</dbReference>
<dbReference type="VEuPathDB" id="FungiDB:YALI0_D04961g"/>
<dbReference type="HOGENOM" id="CLU_000315_24_4_1"/>
<dbReference type="InParanoid" id="Q6CA87"/>
<dbReference type="OMA" id="AFQQWFG"/>
<dbReference type="OrthoDB" id="10546at4891"/>
<dbReference type="Proteomes" id="UP000001300">
    <property type="component" value="Chromosome D"/>
</dbReference>
<dbReference type="GO" id="GO:0005829">
    <property type="term" value="C:cytosol"/>
    <property type="evidence" value="ECO:0007669"/>
    <property type="project" value="EnsemblFungi"/>
</dbReference>
<dbReference type="GO" id="GO:0000812">
    <property type="term" value="C:Swr1 complex"/>
    <property type="evidence" value="ECO:0000318"/>
    <property type="project" value="GO_Central"/>
</dbReference>
<dbReference type="GO" id="GO:0005524">
    <property type="term" value="F:ATP binding"/>
    <property type="evidence" value="ECO:0007669"/>
    <property type="project" value="UniProtKB-KW"/>
</dbReference>
<dbReference type="GO" id="GO:0016887">
    <property type="term" value="F:ATP hydrolysis activity"/>
    <property type="evidence" value="ECO:0000318"/>
    <property type="project" value="GO_Central"/>
</dbReference>
<dbReference type="GO" id="GO:0003677">
    <property type="term" value="F:DNA binding"/>
    <property type="evidence" value="ECO:0007669"/>
    <property type="project" value="UniProtKB-KW"/>
</dbReference>
<dbReference type="GO" id="GO:0004386">
    <property type="term" value="F:helicase activity"/>
    <property type="evidence" value="ECO:0007669"/>
    <property type="project" value="UniProtKB-KW"/>
</dbReference>
<dbReference type="GO" id="GO:0042393">
    <property type="term" value="F:histone binding"/>
    <property type="evidence" value="ECO:0000318"/>
    <property type="project" value="GO_Central"/>
</dbReference>
<dbReference type="GO" id="GO:0005198">
    <property type="term" value="F:structural molecule activity"/>
    <property type="evidence" value="ECO:0007669"/>
    <property type="project" value="EnsemblFungi"/>
</dbReference>
<dbReference type="GO" id="GO:0006338">
    <property type="term" value="P:chromatin remodeling"/>
    <property type="evidence" value="ECO:0000318"/>
    <property type="project" value="GO_Central"/>
</dbReference>
<dbReference type="GO" id="GO:0000725">
    <property type="term" value="P:recombinational repair"/>
    <property type="evidence" value="ECO:0007669"/>
    <property type="project" value="EnsemblFungi"/>
</dbReference>
<dbReference type="CDD" id="cd18003">
    <property type="entry name" value="DEXQc_SRCAP"/>
    <property type="match status" value="1"/>
</dbReference>
<dbReference type="CDD" id="cd18793">
    <property type="entry name" value="SF2_C_SNF"/>
    <property type="match status" value="1"/>
</dbReference>
<dbReference type="FunFam" id="3.40.50.10810:FF:000005">
    <property type="entry name" value="Photoperiod-independent early flowering 1"/>
    <property type="match status" value="1"/>
</dbReference>
<dbReference type="FunFam" id="3.40.50.300:FF:000655">
    <property type="entry name" value="Protein PHOTOPERIOD-INDEPENDENT EARLY FLOWERING 1"/>
    <property type="match status" value="1"/>
</dbReference>
<dbReference type="Gene3D" id="3.40.50.300">
    <property type="entry name" value="P-loop containing nucleotide triphosphate hydrolases"/>
    <property type="match status" value="1"/>
</dbReference>
<dbReference type="Gene3D" id="1.20.120.850">
    <property type="entry name" value="SWI2/SNF2 ATPases, N-terminal domain"/>
    <property type="match status" value="1"/>
</dbReference>
<dbReference type="Gene3D" id="3.40.50.10810">
    <property type="entry name" value="Tandem AAA-ATPase domain"/>
    <property type="match status" value="1"/>
</dbReference>
<dbReference type="InterPro" id="IPR002464">
    <property type="entry name" value="DNA/RNA_helicase_DEAH_CS"/>
</dbReference>
<dbReference type="InterPro" id="IPR014001">
    <property type="entry name" value="Helicase_ATP-bd"/>
</dbReference>
<dbReference type="InterPro" id="IPR001650">
    <property type="entry name" value="Helicase_C-like"/>
</dbReference>
<dbReference type="InterPro" id="IPR014012">
    <property type="entry name" value="HSA_dom"/>
</dbReference>
<dbReference type="InterPro" id="IPR050520">
    <property type="entry name" value="INO80/SWR1_helicase"/>
</dbReference>
<dbReference type="InterPro" id="IPR027417">
    <property type="entry name" value="P-loop_NTPase"/>
</dbReference>
<dbReference type="InterPro" id="IPR038718">
    <property type="entry name" value="SNF2-like_sf"/>
</dbReference>
<dbReference type="InterPro" id="IPR049730">
    <property type="entry name" value="SNF2/RAD54-like_C"/>
</dbReference>
<dbReference type="InterPro" id="IPR000330">
    <property type="entry name" value="SNF2_N"/>
</dbReference>
<dbReference type="PANTHER" id="PTHR45685:SF1">
    <property type="entry name" value="HELICASE SRCAP"/>
    <property type="match status" value="1"/>
</dbReference>
<dbReference type="PANTHER" id="PTHR45685">
    <property type="entry name" value="HELICASE SRCAP-RELATED"/>
    <property type="match status" value="1"/>
</dbReference>
<dbReference type="Pfam" id="PF00271">
    <property type="entry name" value="Helicase_C"/>
    <property type="match status" value="1"/>
</dbReference>
<dbReference type="Pfam" id="PF07529">
    <property type="entry name" value="HSA"/>
    <property type="match status" value="1"/>
</dbReference>
<dbReference type="Pfam" id="PF00176">
    <property type="entry name" value="SNF2-rel_dom"/>
    <property type="match status" value="1"/>
</dbReference>
<dbReference type="SMART" id="SM00487">
    <property type="entry name" value="DEXDc"/>
    <property type="match status" value="1"/>
</dbReference>
<dbReference type="SMART" id="SM00490">
    <property type="entry name" value="HELICc"/>
    <property type="match status" value="1"/>
</dbReference>
<dbReference type="SMART" id="SM00573">
    <property type="entry name" value="HSA"/>
    <property type="match status" value="1"/>
</dbReference>
<dbReference type="SUPFAM" id="SSF52540">
    <property type="entry name" value="P-loop containing nucleoside triphosphate hydrolases"/>
    <property type="match status" value="2"/>
</dbReference>
<dbReference type="PROSITE" id="PS00690">
    <property type="entry name" value="DEAH_ATP_HELICASE"/>
    <property type="match status" value="1"/>
</dbReference>
<dbReference type="PROSITE" id="PS51192">
    <property type="entry name" value="HELICASE_ATP_BIND_1"/>
    <property type="match status" value="1"/>
</dbReference>
<dbReference type="PROSITE" id="PS51194">
    <property type="entry name" value="HELICASE_CTER"/>
    <property type="match status" value="1"/>
</dbReference>
<dbReference type="PROSITE" id="PS51204">
    <property type="entry name" value="HSA"/>
    <property type="match status" value="1"/>
</dbReference>
<organism>
    <name type="scientific">Yarrowia lipolytica (strain CLIB 122 / E 150)</name>
    <name type="common">Yeast</name>
    <name type="synonym">Candida lipolytica</name>
    <dbReference type="NCBI Taxonomy" id="284591"/>
    <lineage>
        <taxon>Eukaryota</taxon>
        <taxon>Fungi</taxon>
        <taxon>Dikarya</taxon>
        <taxon>Ascomycota</taxon>
        <taxon>Saccharomycotina</taxon>
        <taxon>Dipodascomycetes</taxon>
        <taxon>Dipodascales</taxon>
        <taxon>Dipodascales incertae sedis</taxon>
        <taxon>Yarrowia</taxon>
    </lineage>
</organism>
<name>SWR1_YARLI</name>
<feature type="chain" id="PRO_0000074374" description="Helicase SWR1">
    <location>
        <begin position="1"/>
        <end position="1772"/>
    </location>
</feature>
<feature type="domain" description="HSA" evidence="4">
    <location>
        <begin position="536"/>
        <end position="609"/>
    </location>
</feature>
<feature type="domain" description="Helicase ATP-binding" evidence="2">
    <location>
        <begin position="921"/>
        <end position="1086"/>
    </location>
</feature>
<feature type="domain" description="Helicase C-terminal" evidence="3">
    <location>
        <begin position="1470"/>
        <end position="1623"/>
    </location>
</feature>
<feature type="region of interest" description="Disordered" evidence="5">
    <location>
        <begin position="1"/>
        <end position="170"/>
    </location>
</feature>
<feature type="region of interest" description="Disordered" evidence="5">
    <location>
        <begin position="282"/>
        <end position="402"/>
    </location>
</feature>
<feature type="region of interest" description="Disordered" evidence="5">
    <location>
        <begin position="656"/>
        <end position="854"/>
    </location>
</feature>
<feature type="region of interest" description="Disordered" evidence="5">
    <location>
        <begin position="1681"/>
        <end position="1757"/>
    </location>
</feature>
<feature type="short sequence motif" description="DEAH box">
    <location>
        <begin position="1037"/>
        <end position="1040"/>
    </location>
</feature>
<feature type="compositionally biased region" description="Polar residues" evidence="5">
    <location>
        <begin position="7"/>
        <end position="19"/>
    </location>
</feature>
<feature type="compositionally biased region" description="Low complexity" evidence="5">
    <location>
        <begin position="61"/>
        <end position="71"/>
    </location>
</feature>
<feature type="compositionally biased region" description="Basic residues" evidence="5">
    <location>
        <begin position="107"/>
        <end position="121"/>
    </location>
</feature>
<feature type="compositionally biased region" description="Acidic residues" evidence="5">
    <location>
        <begin position="126"/>
        <end position="163"/>
    </location>
</feature>
<feature type="compositionally biased region" description="Acidic residues" evidence="5">
    <location>
        <begin position="282"/>
        <end position="323"/>
    </location>
</feature>
<feature type="compositionally biased region" description="Basic residues" evidence="5">
    <location>
        <begin position="338"/>
        <end position="379"/>
    </location>
</feature>
<feature type="compositionally biased region" description="Acidic residues" evidence="5">
    <location>
        <begin position="665"/>
        <end position="695"/>
    </location>
</feature>
<feature type="compositionally biased region" description="Acidic residues" evidence="5">
    <location>
        <begin position="727"/>
        <end position="757"/>
    </location>
</feature>
<feature type="compositionally biased region" description="Acidic residues" evidence="5">
    <location>
        <begin position="770"/>
        <end position="800"/>
    </location>
</feature>
<feature type="compositionally biased region" description="Acidic residues" evidence="5">
    <location>
        <begin position="818"/>
        <end position="847"/>
    </location>
</feature>
<feature type="compositionally biased region" description="Acidic residues" evidence="5">
    <location>
        <begin position="1740"/>
        <end position="1752"/>
    </location>
</feature>
<feature type="binding site" evidence="2">
    <location>
        <begin position="934"/>
        <end position="941"/>
    </location>
    <ligand>
        <name>ATP</name>
        <dbReference type="ChEBI" id="CHEBI:30616"/>
    </ligand>
</feature>
<protein>
    <recommendedName>
        <fullName>Helicase SWR1</fullName>
        <ecNumber>3.6.4.12</ecNumber>
    </recommendedName>
</protein>
<comment type="function">
    <text evidence="1">Catalytic component of the SWR1 complex which mediates the ATP-dependent exchange of histone H2A for the H2A variant HZT1 leading to transcriptional regulation of selected genes by chromatin remodeling.</text>
</comment>
<comment type="catalytic activity">
    <reaction>
        <text>ATP + H2O = ADP + phosphate + H(+)</text>
        <dbReference type="Rhea" id="RHEA:13065"/>
        <dbReference type="ChEBI" id="CHEBI:15377"/>
        <dbReference type="ChEBI" id="CHEBI:15378"/>
        <dbReference type="ChEBI" id="CHEBI:30616"/>
        <dbReference type="ChEBI" id="CHEBI:43474"/>
        <dbReference type="ChEBI" id="CHEBI:456216"/>
        <dbReference type="EC" id="3.6.4.12"/>
    </reaction>
</comment>
<comment type="subunit">
    <text evidence="1">Component of the SWR1 chromatin-remodeling complex.</text>
</comment>
<comment type="subcellular location">
    <subcellularLocation>
        <location evidence="4">Nucleus</location>
    </subcellularLocation>
</comment>
<comment type="similarity">
    <text evidence="6">Belongs to the SNF2/RAD54 helicase family. SWR1 subfamily.</text>
</comment>
<proteinExistence type="inferred from homology"/>
<evidence type="ECO:0000250" key="1"/>
<evidence type="ECO:0000255" key="2">
    <source>
        <dbReference type="PROSITE-ProRule" id="PRU00541"/>
    </source>
</evidence>
<evidence type="ECO:0000255" key="3">
    <source>
        <dbReference type="PROSITE-ProRule" id="PRU00542"/>
    </source>
</evidence>
<evidence type="ECO:0000255" key="4">
    <source>
        <dbReference type="PROSITE-ProRule" id="PRU00549"/>
    </source>
</evidence>
<evidence type="ECO:0000256" key="5">
    <source>
        <dbReference type="SAM" id="MobiDB-lite"/>
    </source>
</evidence>
<evidence type="ECO:0000305" key="6"/>
<keyword id="KW-0010">Activator</keyword>
<keyword id="KW-0067">ATP-binding</keyword>
<keyword id="KW-0156">Chromatin regulator</keyword>
<keyword id="KW-0238">DNA-binding</keyword>
<keyword id="KW-0347">Helicase</keyword>
<keyword id="KW-0378">Hydrolase</keyword>
<keyword id="KW-0547">Nucleotide-binding</keyword>
<keyword id="KW-0539">Nucleus</keyword>
<keyword id="KW-1185">Reference proteome</keyword>
<keyword id="KW-0804">Transcription</keyword>
<keyword id="KW-0805">Transcription regulation</keyword>
<sequence>MSKRTQDLATTHANGSVDSATAPGASKRRRLADPVLDTPVELLASGRRTSGRHRPVEDASRQATQQQQAPGTPGGRQQRRAAAAAKESLSTPKRAPAKPKEKTPKATPKKTPSRRNGRRRSVKVEEVEEEEPEEEEGPEEEEAPEEEVEGDDEEEVQVEEEAEPVSLTPLEEKKQELAKLISDNDSRVRLLFHLKQFVSLVFYDPAEAKQDQSSVWEQVSMRESIIGTRTRLTQFQQNYDLWTKYLERKTGGHMRSTRRQIRSKQGALEDDFVIKLKEEMTAVEEEEEEELVEEEEEEEEEEEQEEDEEQEQQEEEEEEQEEEVTSRRGSRRSAPTKAKGKSKTASKTSKSKSKASSKSKSKSKGKGQARASKLSKSRRYVNAVDSSSEEESDYDPNKPYDVSKEVWEPIDTGWLLPDSEDEYYHFDDKFAQHMFPNGVKLKLNVSLKPPRVTHPAHLLLDVAEGQTPDNRERLEGFMSSFKLLDEEMTLEEYEEHYERELETLDKINEMKREGVLQGLADEEEGESLTVAEIRRGFNDPERSTRPTHWDHVVAQACHFAKLMADERKAHVSQAKRLAAAVDQHFRRLEGAEERDKKAQAKLLKTMARKMAQDVMRRWKLAEKVVLKKKEQEAKEEERKQGKKKLKEILENSAQLLEARVRGDNDTPETEEGEKEEVEAVSDDAMSDVDMEDDREQVEVDTRDDDELTVEELRAKYAALDNIKVERAEEEDEEDEENGDDEDEDEEEDDAEIEEETETTTPALETPIDTPAEEDEFSSDTDITLDSEDESSSEQESDYEAETTAPGLAALMGGPKAIEEDEEEDDAFVIKEEEEEVEVEDDEEEEKADTEVDRKVETVSEAVGEAVEEIKSNGVESKPTSNGVDVTELDRVTPERAPAVEPPFLLRGTLRAYQQLGLEWLAGLYNNDTNGILADEMGLGKTIQTISLLSYLACEHHIWGPHLIIVPTSVMLNWEMEFKRFAPGFKVMTYYGNPVQRREKRRGWNKEDTWHVCITSYQLVLQDLFAFRRKRWHYMILDEAHNIKNFRSQRWQSLLHFNTVRRLLLTGTPLQNNLMELWSLLYFLMPSSRNQMDMPGFANLKDFQEWFSRPIDKMVEGGVDEEAKTTVSKLHQILRPYLLRRLKKDVEKQMPAKYEHVVYCRLSKRQRYLYDDFMSRAQTRETLKTGNFLSIINCLMQLRKVCNHPDLFEVRPIVTSFVQEQSVITPYERVSDRVKSLLVNTVDGGYAPSEVSLSFLGFNAELEDMSTHEATSFRKYHNVQTVKNRIRELEKFCPAETPEEERYNDIEGHYKHMHHASFQQVIGSLKRVEYLHQIALAKKPVYGRNLVEVCTINTSRLQPDRPEETNESSYHWQLTHLRHPTVQECANNMAPYIERFACITPKAVTLNMAELSLGGIGPILQQRYFKQVTPKKSQRVVVGPPAAIADPFHQAQVKLSIAFPDKRLLQYDCGKLQRLATLLQDLIAGGHRALIFTQMTKVLDVLEQFLNIHGLRYMRLDGATKIEQRQLLTERFNTDPKIPVFILSTRSGGLGINLTGADTVIFYDSDWNPSMDKQCQDRCHRIGQTRDVHIYRFVSEHTIESNILKKANQKQILDNVVIQDGEFTTDYFNKMSVHDMLGLEPDDDAAPVADTLNLSGKNLERALAQAEDADDAAAAKVATKETNLDVEDFDETQKENNKGATPGSRSTSATPMEKENTGELSSAMDSPTPVATPDVAVDNGGGDDDDSDSDESDSGIGHIDEYMIKFIEDGWFW</sequence>
<gene>
    <name type="primary">SWR1</name>
    <name type="ordered locus">YALI0D04961g</name>
</gene>